<accession>Q9GSR5</accession>
<dbReference type="EMBL" id="AF297876">
    <property type="protein sequence ID" value="AAG15252.1"/>
    <property type="molecule type" value="Genomic_DNA"/>
</dbReference>
<dbReference type="SMR" id="Q9GSR5"/>
<dbReference type="ChEMBL" id="CHEMBL5058522"/>
<dbReference type="VEuPathDB" id="MicrosporidiaDB:Eint_030710"/>
<dbReference type="GO" id="GO:0005737">
    <property type="term" value="C:cytoplasm"/>
    <property type="evidence" value="ECO:0007669"/>
    <property type="project" value="UniProtKB-KW"/>
</dbReference>
<dbReference type="GO" id="GO:0005874">
    <property type="term" value="C:microtubule"/>
    <property type="evidence" value="ECO:0007669"/>
    <property type="project" value="UniProtKB-KW"/>
</dbReference>
<dbReference type="GO" id="GO:0005525">
    <property type="term" value="F:GTP binding"/>
    <property type="evidence" value="ECO:0007669"/>
    <property type="project" value="UniProtKB-KW"/>
</dbReference>
<dbReference type="GO" id="GO:0003924">
    <property type="term" value="F:GTPase activity"/>
    <property type="evidence" value="ECO:0007669"/>
    <property type="project" value="InterPro"/>
</dbReference>
<dbReference type="GO" id="GO:0046872">
    <property type="term" value="F:metal ion binding"/>
    <property type="evidence" value="ECO:0007669"/>
    <property type="project" value="UniProtKB-KW"/>
</dbReference>
<dbReference type="GO" id="GO:0005200">
    <property type="term" value="F:structural constituent of cytoskeleton"/>
    <property type="evidence" value="ECO:0007669"/>
    <property type="project" value="InterPro"/>
</dbReference>
<dbReference type="GO" id="GO:0007017">
    <property type="term" value="P:microtubule-based process"/>
    <property type="evidence" value="ECO:0007669"/>
    <property type="project" value="InterPro"/>
</dbReference>
<dbReference type="CDD" id="cd02187">
    <property type="entry name" value="beta_tubulin"/>
    <property type="match status" value="1"/>
</dbReference>
<dbReference type="FunFam" id="1.10.287.600:FF:000002">
    <property type="entry name" value="Tubulin beta chain"/>
    <property type="match status" value="1"/>
</dbReference>
<dbReference type="FunFam" id="3.30.1330.20:FF:000002">
    <property type="entry name" value="Tubulin beta chain"/>
    <property type="match status" value="1"/>
</dbReference>
<dbReference type="FunFam" id="3.40.50.1440:FF:000009">
    <property type="entry name" value="Tubulin beta chain"/>
    <property type="match status" value="1"/>
</dbReference>
<dbReference type="Gene3D" id="1.10.287.600">
    <property type="entry name" value="Helix hairpin bin"/>
    <property type="match status" value="1"/>
</dbReference>
<dbReference type="Gene3D" id="3.30.1330.20">
    <property type="entry name" value="Tubulin/FtsZ, C-terminal domain"/>
    <property type="match status" value="1"/>
</dbReference>
<dbReference type="Gene3D" id="3.40.50.1440">
    <property type="entry name" value="Tubulin/FtsZ, GTPase domain"/>
    <property type="match status" value="1"/>
</dbReference>
<dbReference type="InterPro" id="IPR013838">
    <property type="entry name" value="Beta-tubulin_BS"/>
</dbReference>
<dbReference type="InterPro" id="IPR002453">
    <property type="entry name" value="Beta_tubulin"/>
</dbReference>
<dbReference type="InterPro" id="IPR008280">
    <property type="entry name" value="Tub_FtsZ_C"/>
</dbReference>
<dbReference type="InterPro" id="IPR000217">
    <property type="entry name" value="Tubulin"/>
</dbReference>
<dbReference type="InterPro" id="IPR037103">
    <property type="entry name" value="Tubulin/FtsZ-like_C"/>
</dbReference>
<dbReference type="InterPro" id="IPR018316">
    <property type="entry name" value="Tubulin/FtsZ_2-layer-sand-dom"/>
</dbReference>
<dbReference type="InterPro" id="IPR036525">
    <property type="entry name" value="Tubulin/FtsZ_GTPase_sf"/>
</dbReference>
<dbReference type="InterPro" id="IPR023123">
    <property type="entry name" value="Tubulin_C"/>
</dbReference>
<dbReference type="InterPro" id="IPR017975">
    <property type="entry name" value="Tubulin_CS"/>
</dbReference>
<dbReference type="InterPro" id="IPR003008">
    <property type="entry name" value="Tubulin_FtsZ_GTPase"/>
</dbReference>
<dbReference type="PANTHER" id="PTHR11588">
    <property type="entry name" value="TUBULIN"/>
    <property type="match status" value="1"/>
</dbReference>
<dbReference type="Pfam" id="PF00091">
    <property type="entry name" value="Tubulin"/>
    <property type="match status" value="1"/>
</dbReference>
<dbReference type="Pfam" id="PF03953">
    <property type="entry name" value="Tubulin_C"/>
    <property type="match status" value="1"/>
</dbReference>
<dbReference type="PRINTS" id="PR01163">
    <property type="entry name" value="BETATUBULIN"/>
</dbReference>
<dbReference type="PRINTS" id="PR01161">
    <property type="entry name" value="TUBULIN"/>
</dbReference>
<dbReference type="SMART" id="SM00864">
    <property type="entry name" value="Tubulin"/>
    <property type="match status" value="1"/>
</dbReference>
<dbReference type="SMART" id="SM00865">
    <property type="entry name" value="Tubulin_C"/>
    <property type="match status" value="1"/>
</dbReference>
<dbReference type="SUPFAM" id="SSF55307">
    <property type="entry name" value="Tubulin C-terminal domain-like"/>
    <property type="match status" value="1"/>
</dbReference>
<dbReference type="SUPFAM" id="SSF52490">
    <property type="entry name" value="Tubulin nucleotide-binding domain-like"/>
    <property type="match status" value="1"/>
</dbReference>
<dbReference type="PROSITE" id="PS00227">
    <property type="entry name" value="TUBULIN"/>
    <property type="match status" value="1"/>
</dbReference>
<dbReference type="PROSITE" id="PS00228">
    <property type="entry name" value="TUBULIN_B_AUTOREG"/>
    <property type="match status" value="1"/>
</dbReference>
<gene>
    <name type="primary">TUB2</name>
</gene>
<feature type="chain" id="PRO_0000048410" description="Tubulin beta chain">
    <location>
        <begin position="1"/>
        <end position="439"/>
    </location>
</feature>
<feature type="binding site" evidence="2">
    <location>
        <position position="11"/>
    </location>
    <ligand>
        <name>GTP</name>
        <dbReference type="ChEBI" id="CHEBI:37565"/>
    </ligand>
</feature>
<feature type="binding site" evidence="1">
    <location>
        <position position="69"/>
    </location>
    <ligand>
        <name>GTP</name>
        <dbReference type="ChEBI" id="CHEBI:37565"/>
    </ligand>
</feature>
<feature type="binding site" evidence="1">
    <location>
        <position position="69"/>
    </location>
    <ligand>
        <name>Mg(2+)</name>
        <dbReference type="ChEBI" id="CHEBI:18420"/>
    </ligand>
</feature>
<feature type="binding site" evidence="2">
    <location>
        <position position="138"/>
    </location>
    <ligand>
        <name>GTP</name>
        <dbReference type="ChEBI" id="CHEBI:37565"/>
    </ligand>
</feature>
<feature type="binding site" evidence="2">
    <location>
        <position position="142"/>
    </location>
    <ligand>
        <name>GTP</name>
        <dbReference type="ChEBI" id="CHEBI:37565"/>
    </ligand>
</feature>
<feature type="binding site" evidence="2">
    <location>
        <position position="143"/>
    </location>
    <ligand>
        <name>GTP</name>
        <dbReference type="ChEBI" id="CHEBI:37565"/>
    </ligand>
</feature>
<feature type="binding site" evidence="2">
    <location>
        <position position="144"/>
    </location>
    <ligand>
        <name>GTP</name>
        <dbReference type="ChEBI" id="CHEBI:37565"/>
    </ligand>
</feature>
<feature type="binding site" evidence="2">
    <location>
        <position position="204"/>
    </location>
    <ligand>
        <name>GTP</name>
        <dbReference type="ChEBI" id="CHEBI:37565"/>
    </ligand>
</feature>
<feature type="binding site" evidence="2">
    <location>
        <position position="226"/>
    </location>
    <ligand>
        <name>GTP</name>
        <dbReference type="ChEBI" id="CHEBI:37565"/>
    </ligand>
</feature>
<reference key="1">
    <citation type="submission" date="2000-08" db="EMBL/GenBank/DDBJ databases">
        <authorList>
            <person name="Bonafonte M.T."/>
            <person name="Mead J.R."/>
        </authorList>
    </citation>
    <scope>NUCLEOTIDE SEQUENCE [GENOMIC DNA]</scope>
</reference>
<sequence>MREIIHLQTGQCGNQVGCKFWETISGEHGIDQSGRYVGTSDNQLERVNVYYNEASSKKYVPRAVLIDLEPGTMDAVRQGPFGELFRPDNFVFGQSGAGNNWAKGHYTEGAELIDSVMDVVRKEAESSDCLQGFQITHSLGGGTGAGMGTLLLSKIREDFPDRMICTFSVVPSPKVSDTVVEPYNATLSIHQLVENADETFCIDNEALYDMCFRTLKLNNPGYGDLNHLVSLVMSGVTTCLRFPGQLNAYLRKLAVNMIPFPRLHFFVVGFAPLTAVGTQKFKTYSVSELTQQMFDSKNMMTACDPKKGRYLTVAAMFRGKISMKDVDEQMSMVQSKNSSLFVEWIPSNVKTAVCDIAPTGLEMSATFVGNTTSIQELFKRISDQFTVMFRRKAFLHWYTGEGMDEMEFSEAESNMNDLLSEYQQYQDATVEDAEEFLVN</sequence>
<evidence type="ECO:0000250" key="1">
    <source>
        <dbReference type="UniProtKB" id="P68363"/>
    </source>
</evidence>
<evidence type="ECO:0000250" key="2">
    <source>
        <dbReference type="UniProtKB" id="Q13509"/>
    </source>
</evidence>
<evidence type="ECO:0000305" key="3"/>
<organism>
    <name type="scientific">Encephalitozoon intestinalis</name>
    <name type="common">Microsporidian parasite</name>
    <dbReference type="NCBI Taxonomy" id="58839"/>
    <lineage>
        <taxon>Eukaryota</taxon>
        <taxon>Fungi</taxon>
        <taxon>Fungi incertae sedis</taxon>
        <taxon>Microsporidia</taxon>
        <taxon>Unikaryonidae</taxon>
        <taxon>Encephalitozoon</taxon>
    </lineage>
</organism>
<protein>
    <recommendedName>
        <fullName>Tubulin beta chain</fullName>
    </recommendedName>
    <alternativeName>
        <fullName>Beta-tubulin</fullName>
    </alternativeName>
</protein>
<keyword id="KW-0963">Cytoplasm</keyword>
<keyword id="KW-0206">Cytoskeleton</keyword>
<keyword id="KW-0342">GTP-binding</keyword>
<keyword id="KW-0460">Magnesium</keyword>
<keyword id="KW-0479">Metal-binding</keyword>
<keyword id="KW-0493">Microtubule</keyword>
<keyword id="KW-0547">Nucleotide-binding</keyword>
<proteinExistence type="inferred from homology"/>
<comment type="function">
    <text>Tubulin is the major constituent of microtubules, a cylinder consisting of laterally associated linear protofilaments composed of alpha- and beta-tubulin heterodimers. Microtubules grow by the addition of GTP-tubulin dimers to the microtubule end, where a stabilizing cap forms. Below the cap, tubulin dimers are in GDP-bound state, owing to GTPase activity of alpha-tubulin.</text>
</comment>
<comment type="cofactor">
    <cofactor evidence="1">
        <name>Mg(2+)</name>
        <dbReference type="ChEBI" id="CHEBI:18420"/>
    </cofactor>
</comment>
<comment type="subunit">
    <text>Dimer of alpha and beta chains. A typical microtubule is a hollow water-filled tube with an outer diameter of 25 nm and an inner diameter of 15 nM. Alpha-beta heterodimers associate head-to-tail to form protofilaments running lengthwise along the microtubule wall with the beta-tubulin subunit facing the microtubule plus end conferring a structural polarity. Microtubules usually have 13 protofilaments but different protofilament numbers can be found in some organisms and specialized cells.</text>
</comment>
<comment type="subcellular location">
    <subcellularLocation>
        <location>Cytoplasm</location>
        <location>Cytoskeleton</location>
    </subcellularLocation>
</comment>
<comment type="similarity">
    <text evidence="3">Belongs to the tubulin family.</text>
</comment>
<name>TBB_ENCIN</name>